<keyword id="KW-0067">ATP-binding</keyword>
<keyword id="KW-0963">Cytoplasm</keyword>
<keyword id="KW-0436">Ligase</keyword>
<keyword id="KW-0460">Magnesium</keyword>
<keyword id="KW-0479">Metal-binding</keyword>
<keyword id="KW-0547">Nucleotide-binding</keyword>
<keyword id="KW-0658">Purine biosynthesis</keyword>
<keyword id="KW-1185">Reference proteome</keyword>
<protein>
    <recommendedName>
        <fullName evidence="1">Phosphoribosylformylglycinamidine synthase subunit PurL</fullName>
        <shortName evidence="1">FGAM synthase</shortName>
        <ecNumber evidence="1">6.3.5.3</ecNumber>
    </recommendedName>
    <alternativeName>
        <fullName evidence="1">Formylglycinamide ribonucleotide amidotransferase subunit II</fullName>
        <shortName evidence="1">FGAR amidotransferase II</shortName>
        <shortName evidence="1">FGAR-AT II</shortName>
    </alternativeName>
    <alternativeName>
        <fullName evidence="1">Glutamine amidotransferase PurL</fullName>
    </alternativeName>
    <alternativeName>
        <fullName evidence="1">Phosphoribosylformylglycinamidine synthase subunit II</fullName>
    </alternativeName>
</protein>
<proteinExistence type="inferred from homology"/>
<reference key="1">
    <citation type="journal article" date="2001" name="Science">
        <title>The genome of the natural genetic engineer Agrobacterium tumefaciens C58.</title>
        <authorList>
            <person name="Wood D.W."/>
            <person name="Setubal J.C."/>
            <person name="Kaul R."/>
            <person name="Monks D.E."/>
            <person name="Kitajima J.P."/>
            <person name="Okura V.K."/>
            <person name="Zhou Y."/>
            <person name="Chen L."/>
            <person name="Wood G.E."/>
            <person name="Almeida N.F. Jr."/>
            <person name="Woo L."/>
            <person name="Chen Y."/>
            <person name="Paulsen I.T."/>
            <person name="Eisen J.A."/>
            <person name="Karp P.D."/>
            <person name="Bovee D. Sr."/>
            <person name="Chapman P."/>
            <person name="Clendenning J."/>
            <person name="Deatherage G."/>
            <person name="Gillet W."/>
            <person name="Grant C."/>
            <person name="Kutyavin T."/>
            <person name="Levy R."/>
            <person name="Li M.-J."/>
            <person name="McClelland E."/>
            <person name="Palmieri A."/>
            <person name="Raymond C."/>
            <person name="Rouse G."/>
            <person name="Saenphimmachak C."/>
            <person name="Wu Z."/>
            <person name="Romero P."/>
            <person name="Gordon D."/>
            <person name="Zhang S."/>
            <person name="Yoo H."/>
            <person name="Tao Y."/>
            <person name="Biddle P."/>
            <person name="Jung M."/>
            <person name="Krespan W."/>
            <person name="Perry M."/>
            <person name="Gordon-Kamm B."/>
            <person name="Liao L."/>
            <person name="Kim S."/>
            <person name="Hendrick C."/>
            <person name="Zhao Z.-Y."/>
            <person name="Dolan M."/>
            <person name="Chumley F."/>
            <person name="Tingey S.V."/>
            <person name="Tomb J.-F."/>
            <person name="Gordon M.P."/>
            <person name="Olson M.V."/>
            <person name="Nester E.W."/>
        </authorList>
    </citation>
    <scope>NUCLEOTIDE SEQUENCE [LARGE SCALE GENOMIC DNA]</scope>
    <source>
        <strain>C58 / ATCC 33970</strain>
    </source>
</reference>
<reference key="2">
    <citation type="journal article" date="2001" name="Science">
        <title>Genome sequence of the plant pathogen and biotechnology agent Agrobacterium tumefaciens C58.</title>
        <authorList>
            <person name="Goodner B."/>
            <person name="Hinkle G."/>
            <person name="Gattung S."/>
            <person name="Miller N."/>
            <person name="Blanchard M."/>
            <person name="Qurollo B."/>
            <person name="Goldman B.S."/>
            <person name="Cao Y."/>
            <person name="Askenazi M."/>
            <person name="Halling C."/>
            <person name="Mullin L."/>
            <person name="Houmiel K."/>
            <person name="Gordon J."/>
            <person name="Vaudin M."/>
            <person name="Iartchouk O."/>
            <person name="Epp A."/>
            <person name="Liu F."/>
            <person name="Wollam C."/>
            <person name="Allinger M."/>
            <person name="Doughty D."/>
            <person name="Scott C."/>
            <person name="Lappas C."/>
            <person name="Markelz B."/>
            <person name="Flanagan C."/>
            <person name="Crowell C."/>
            <person name="Gurson J."/>
            <person name="Lomo C."/>
            <person name="Sear C."/>
            <person name="Strub G."/>
            <person name="Cielo C."/>
            <person name="Slater S."/>
        </authorList>
    </citation>
    <scope>NUCLEOTIDE SEQUENCE [LARGE SCALE GENOMIC DNA]</scope>
    <source>
        <strain>C58 / ATCC 33970</strain>
    </source>
</reference>
<sequence>MPVKLRIFLSHGEASCAKEPETFLGSNRVRPMSISNSIKITPELVASHGLKPDEYQRILDLIGREPSFTELGIFSAMWNEHCSYKSSKKWLKTLPTTGPRVIQGPGENAGVVDIDDGDCVVFKMESHNHPSYIEPYQGAATGVGGILRDVFTMGARPIAAMNALRFGAPDHPKTRHLVAGVVAGVGGYGNSFGVPTVGGEVEFDPRYNGNILVNAFAAGLAKSNAIFLSEAKGVGLPVVYLGAKTGRDGVGGATMASAEFDESIEEKRPTVQVGDPFTEKCLLEACLELMKTGAVIAIQDMGAAGLTCSAVEMGAKGDLGIELDLNAVPVREERMTAYEMMLSESQERMLMVLEPSKEEVAKAIFVKWGLDFAIVGKTTDDLRFRVLHNGEEVANLPIKELGDEAPEYDRPWTPAKVPAALSETDIPEADIADALVSLVGSANNSSRRWVYEQYDTLIQGNSLQLPGGDAGVVRVEGHDKKALAFSSDVTPRYVEADAFEGGKQAVAECWRNITATGALPLAATDNLNFGNPEKPEIMSQLVHAIKGIGEACRVLEFPIVSGNVSLYNETNGQAILPTPTIGGVGLLKDWGRMARIRFAAADEVVLLVGAPAGLGTHIAQSVYMRDVHGRTDGPAPHVDLIAEKKNGDFVRGLITEGLTTAVHDCSSGGLALAVAEMAISSGIGATIDAVEGHNPILTFYGEDQARYVLTVKKSDLDKVRAAAKAAGVSCPLIGTTGGSTVKLGTARAVEIKELHLAYESWFPQFMDGETLIAAE</sequence>
<organism>
    <name type="scientific">Agrobacterium fabrum (strain C58 / ATCC 33970)</name>
    <name type="common">Agrobacterium tumefaciens (strain C58)</name>
    <dbReference type="NCBI Taxonomy" id="176299"/>
    <lineage>
        <taxon>Bacteria</taxon>
        <taxon>Pseudomonadati</taxon>
        <taxon>Pseudomonadota</taxon>
        <taxon>Alphaproteobacteria</taxon>
        <taxon>Hyphomicrobiales</taxon>
        <taxon>Rhizobiaceae</taxon>
        <taxon>Rhizobium/Agrobacterium group</taxon>
        <taxon>Agrobacterium</taxon>
        <taxon>Agrobacterium tumefaciens complex</taxon>
    </lineage>
</organism>
<comment type="function">
    <text evidence="1">Part of the phosphoribosylformylglycinamidine synthase complex involved in the purines biosynthetic pathway. Catalyzes the ATP-dependent conversion of formylglycinamide ribonucleotide (FGAR) and glutamine to yield formylglycinamidine ribonucleotide (FGAM) and glutamate. The FGAM synthase complex is composed of three subunits. PurQ produces an ammonia molecule by converting glutamine to glutamate. PurL transfers the ammonia molecule to FGAR to form FGAM in an ATP-dependent manner. PurS interacts with PurQ and PurL and is thought to assist in the transfer of the ammonia molecule from PurQ to PurL.</text>
</comment>
<comment type="catalytic activity">
    <reaction evidence="1">
        <text>N(2)-formyl-N(1)-(5-phospho-beta-D-ribosyl)glycinamide + L-glutamine + ATP + H2O = 2-formamido-N(1)-(5-O-phospho-beta-D-ribosyl)acetamidine + L-glutamate + ADP + phosphate + H(+)</text>
        <dbReference type="Rhea" id="RHEA:17129"/>
        <dbReference type="ChEBI" id="CHEBI:15377"/>
        <dbReference type="ChEBI" id="CHEBI:15378"/>
        <dbReference type="ChEBI" id="CHEBI:29985"/>
        <dbReference type="ChEBI" id="CHEBI:30616"/>
        <dbReference type="ChEBI" id="CHEBI:43474"/>
        <dbReference type="ChEBI" id="CHEBI:58359"/>
        <dbReference type="ChEBI" id="CHEBI:147286"/>
        <dbReference type="ChEBI" id="CHEBI:147287"/>
        <dbReference type="ChEBI" id="CHEBI:456216"/>
        <dbReference type="EC" id="6.3.5.3"/>
    </reaction>
</comment>
<comment type="pathway">
    <text evidence="1">Purine metabolism; IMP biosynthesis via de novo pathway; 5-amino-1-(5-phospho-D-ribosyl)imidazole from N(2)-formyl-N(1)-(5-phospho-D-ribosyl)glycinamide: step 1/2.</text>
</comment>
<comment type="subunit">
    <text evidence="1">Monomer. Part of the FGAM synthase complex composed of 1 PurL, 1 PurQ and 2 PurS subunits.</text>
</comment>
<comment type="subcellular location">
    <subcellularLocation>
        <location evidence="1">Cytoplasm</location>
    </subcellularLocation>
</comment>
<comment type="similarity">
    <text evidence="1">Belongs to the FGAMS family.</text>
</comment>
<comment type="sequence caution" evidence="2">
    <conflict type="erroneous initiation">
        <sequence resource="EMBL-CDS" id="AAK87617"/>
    </conflict>
    <text>Truncated N-terminus.</text>
</comment>
<feature type="chain" id="PRO_0000100429" description="Phosphoribosylformylglycinamidine synthase subunit PurL">
    <location>
        <begin position="1"/>
        <end position="775"/>
    </location>
</feature>
<feature type="active site" evidence="1">
    <location>
        <position position="81"/>
    </location>
</feature>
<feature type="active site" description="Proton acceptor" evidence="1">
    <location>
        <position position="127"/>
    </location>
</feature>
<feature type="binding site" evidence="1">
    <location>
        <position position="84"/>
    </location>
    <ligand>
        <name>ATP</name>
        <dbReference type="ChEBI" id="CHEBI:30616"/>
    </ligand>
</feature>
<feature type="binding site" evidence="1">
    <location>
        <position position="123"/>
    </location>
    <ligand>
        <name>ATP</name>
        <dbReference type="ChEBI" id="CHEBI:30616"/>
    </ligand>
</feature>
<feature type="binding site" evidence="1">
    <location>
        <position position="125"/>
    </location>
    <ligand>
        <name>Mg(2+)</name>
        <dbReference type="ChEBI" id="CHEBI:18420"/>
        <label>1</label>
    </ligand>
</feature>
<feature type="binding site" evidence="1">
    <location>
        <begin position="126"/>
        <end position="129"/>
    </location>
    <ligand>
        <name>substrate</name>
    </ligand>
</feature>
<feature type="binding site" evidence="1">
    <location>
        <position position="148"/>
    </location>
    <ligand>
        <name>substrate</name>
    </ligand>
</feature>
<feature type="binding site" evidence="1">
    <location>
        <position position="149"/>
    </location>
    <ligand>
        <name>Mg(2+)</name>
        <dbReference type="ChEBI" id="CHEBI:18420"/>
        <label>2</label>
    </ligand>
</feature>
<feature type="binding site" evidence="1">
    <location>
        <position position="272"/>
    </location>
    <ligand>
        <name>substrate</name>
    </ligand>
</feature>
<feature type="binding site" evidence="1">
    <location>
        <position position="300"/>
    </location>
    <ligand>
        <name>Mg(2+)</name>
        <dbReference type="ChEBI" id="CHEBI:18420"/>
        <label>2</label>
    </ligand>
</feature>
<feature type="binding site" evidence="1">
    <location>
        <begin position="344"/>
        <end position="346"/>
    </location>
    <ligand>
        <name>substrate</name>
    </ligand>
</feature>
<feature type="binding site" evidence="1">
    <location>
        <position position="525"/>
    </location>
    <ligand>
        <name>ATP</name>
        <dbReference type="ChEBI" id="CHEBI:30616"/>
    </ligand>
</feature>
<feature type="binding site" evidence="1">
    <location>
        <position position="562"/>
    </location>
    <ligand>
        <name>ATP</name>
        <dbReference type="ChEBI" id="CHEBI:30616"/>
    </ligand>
</feature>
<feature type="binding site" evidence="1">
    <location>
        <position position="563"/>
    </location>
    <ligand>
        <name>Mg(2+)</name>
        <dbReference type="ChEBI" id="CHEBI:18420"/>
        <label>1</label>
    </ligand>
</feature>
<feature type="binding site" evidence="1">
    <location>
        <position position="565"/>
    </location>
    <ligand>
        <name>substrate</name>
    </ligand>
</feature>
<gene>
    <name evidence="1" type="primary">purL</name>
    <name type="ordered locus">Atu1850</name>
    <name type="ORF">AGR_C_3393</name>
</gene>
<name>PURL_AGRFC</name>
<accession>Q8UEB0</accession>
<evidence type="ECO:0000255" key="1">
    <source>
        <dbReference type="HAMAP-Rule" id="MF_00420"/>
    </source>
</evidence>
<evidence type="ECO:0000305" key="2"/>
<dbReference type="EC" id="6.3.5.3" evidence="1"/>
<dbReference type="EMBL" id="AE007869">
    <property type="protein sequence ID" value="AAK87617.2"/>
    <property type="status" value="ALT_INIT"/>
    <property type="molecule type" value="Genomic_DNA"/>
</dbReference>
<dbReference type="PIR" id="AH2803">
    <property type="entry name" value="AH2803"/>
</dbReference>
<dbReference type="PIR" id="H97582">
    <property type="entry name" value="H97582"/>
</dbReference>
<dbReference type="RefSeq" id="NP_354832.2">
    <property type="nucleotide sequence ID" value="NC_003062.2"/>
</dbReference>
<dbReference type="RefSeq" id="WP_010971912.1">
    <property type="nucleotide sequence ID" value="NC_003062.2"/>
</dbReference>
<dbReference type="SMR" id="Q8UEB0"/>
<dbReference type="STRING" id="176299.Atu1850"/>
<dbReference type="EnsemblBacteria" id="AAK87617">
    <property type="protein sequence ID" value="AAK87617"/>
    <property type="gene ID" value="Atu1850"/>
</dbReference>
<dbReference type="GeneID" id="1133888"/>
<dbReference type="KEGG" id="atu:Atu1850"/>
<dbReference type="PATRIC" id="fig|176299.10.peg.1863"/>
<dbReference type="eggNOG" id="COG0046">
    <property type="taxonomic scope" value="Bacteria"/>
</dbReference>
<dbReference type="HOGENOM" id="CLU_003100_0_1_5"/>
<dbReference type="OrthoDB" id="9804441at2"/>
<dbReference type="BioCyc" id="AGRO:ATU1850-MONOMER"/>
<dbReference type="UniPathway" id="UPA00074">
    <property type="reaction ID" value="UER00128"/>
</dbReference>
<dbReference type="Proteomes" id="UP000000813">
    <property type="component" value="Chromosome circular"/>
</dbReference>
<dbReference type="GO" id="GO:0005737">
    <property type="term" value="C:cytoplasm"/>
    <property type="evidence" value="ECO:0007669"/>
    <property type="project" value="UniProtKB-SubCell"/>
</dbReference>
<dbReference type="GO" id="GO:0005524">
    <property type="term" value="F:ATP binding"/>
    <property type="evidence" value="ECO:0007669"/>
    <property type="project" value="UniProtKB-UniRule"/>
</dbReference>
<dbReference type="GO" id="GO:0000287">
    <property type="term" value="F:magnesium ion binding"/>
    <property type="evidence" value="ECO:0007669"/>
    <property type="project" value="UniProtKB-UniRule"/>
</dbReference>
<dbReference type="GO" id="GO:0004642">
    <property type="term" value="F:phosphoribosylformylglycinamidine synthase activity"/>
    <property type="evidence" value="ECO:0007669"/>
    <property type="project" value="UniProtKB-UniRule"/>
</dbReference>
<dbReference type="GO" id="GO:0006189">
    <property type="term" value="P:'de novo' IMP biosynthetic process"/>
    <property type="evidence" value="ECO:0007669"/>
    <property type="project" value="UniProtKB-UniRule"/>
</dbReference>
<dbReference type="CDD" id="cd02203">
    <property type="entry name" value="PurL_repeat1"/>
    <property type="match status" value="1"/>
</dbReference>
<dbReference type="CDD" id="cd02204">
    <property type="entry name" value="PurL_repeat2"/>
    <property type="match status" value="1"/>
</dbReference>
<dbReference type="FunFam" id="3.30.1330.10:FF:000004">
    <property type="entry name" value="Phosphoribosylformylglycinamidine synthase subunit PurL"/>
    <property type="match status" value="1"/>
</dbReference>
<dbReference type="Gene3D" id="3.90.650.10">
    <property type="entry name" value="PurM-like C-terminal domain"/>
    <property type="match status" value="2"/>
</dbReference>
<dbReference type="Gene3D" id="3.30.1330.10">
    <property type="entry name" value="PurM-like, N-terminal domain"/>
    <property type="match status" value="2"/>
</dbReference>
<dbReference type="HAMAP" id="MF_00420">
    <property type="entry name" value="PurL_2"/>
    <property type="match status" value="1"/>
</dbReference>
<dbReference type="InterPro" id="IPR010074">
    <property type="entry name" value="PRibForGlyAmidine_synth_PurL"/>
</dbReference>
<dbReference type="InterPro" id="IPR041609">
    <property type="entry name" value="PurL_linker"/>
</dbReference>
<dbReference type="InterPro" id="IPR010918">
    <property type="entry name" value="PurM-like_C_dom"/>
</dbReference>
<dbReference type="InterPro" id="IPR036676">
    <property type="entry name" value="PurM-like_C_sf"/>
</dbReference>
<dbReference type="InterPro" id="IPR016188">
    <property type="entry name" value="PurM-like_N"/>
</dbReference>
<dbReference type="InterPro" id="IPR036921">
    <property type="entry name" value="PurM-like_N_sf"/>
</dbReference>
<dbReference type="NCBIfam" id="TIGR01736">
    <property type="entry name" value="FGAM_synth_II"/>
    <property type="match status" value="1"/>
</dbReference>
<dbReference type="NCBIfam" id="NF002290">
    <property type="entry name" value="PRK01213.1"/>
    <property type="match status" value="1"/>
</dbReference>
<dbReference type="PANTHER" id="PTHR43555">
    <property type="entry name" value="PHOSPHORIBOSYLFORMYLGLYCINAMIDINE SYNTHASE SUBUNIT PURL"/>
    <property type="match status" value="1"/>
</dbReference>
<dbReference type="PANTHER" id="PTHR43555:SF1">
    <property type="entry name" value="PHOSPHORIBOSYLFORMYLGLYCINAMIDINE SYNTHASE SUBUNIT PURL"/>
    <property type="match status" value="1"/>
</dbReference>
<dbReference type="Pfam" id="PF00586">
    <property type="entry name" value="AIRS"/>
    <property type="match status" value="2"/>
</dbReference>
<dbReference type="Pfam" id="PF02769">
    <property type="entry name" value="AIRS_C"/>
    <property type="match status" value="2"/>
</dbReference>
<dbReference type="Pfam" id="PF18072">
    <property type="entry name" value="FGAR-AT_linker"/>
    <property type="match status" value="1"/>
</dbReference>
<dbReference type="PIRSF" id="PIRSF001587">
    <property type="entry name" value="FGAM_synthase_II"/>
    <property type="match status" value="1"/>
</dbReference>
<dbReference type="SUPFAM" id="SSF56042">
    <property type="entry name" value="PurM C-terminal domain-like"/>
    <property type="match status" value="2"/>
</dbReference>
<dbReference type="SUPFAM" id="SSF55326">
    <property type="entry name" value="PurM N-terminal domain-like"/>
    <property type="match status" value="2"/>
</dbReference>